<accession>Q12594</accession>
<accession>A8C7S2</accession>
<comment type="function">
    <text evidence="1 3 4 5">Tryptophan dimethylallyltransferase; part of the gene cluster that mediates the biosynthesis of fungal ergot alkaloid (PubMed:1605639, PubMed:17720822, PubMed:7488077). DmaW catalyzes the first step of ergot alkaloid biosynthesis by condensing dimethylallyl diphosphate (DMAP) and tryptophan to form 4-dimethylallyl-L-tryptophan (PubMed:1605639, PubMed:7488077). The second step is catalyzed by the methyltransferase easF that methylates 4-dimethylallyl-L-tryptophan in the presence of S-adenosyl-L-methionine, resulting in the formation of 4-dimethylallyl-L-abrine (By similarity). The catalase easC and the FAD-dependent oxidoreductase easE then transform 4-dimethylallyl-L-abrine to chanoclavine-I which is further oxidized by easD in the presence of NAD(+), resulting in the formation of chanoclavine-I aldehyde (By similarity). Agroclavine dehydrogenase easG then mediates the conversion of chanoclavine-I aldehyde to agroclavine via a non-enzymatic adduct reaction: the substrate is an iminium intermediate that is formed spontaneously from chanoclavine-I aldehyde in the presence of glutathione (By similarity). Further conversion of agroclavine to paspalic acid is a two-step process involving oxidation of agroclavine to elymoclavine and of elymoclavine to paspalic acid, the second step being performed by the elymoclavine oxidase cloA (PubMed:17720822). However, cloA does not encode a functional enzyme indicating that C.fusiformis terminates its ergot alkaloid pathway at elymoclavine (PubMed:17720822).</text>
</comment>
<comment type="catalytic activity">
    <reaction evidence="3 5">
        <text>L-tryptophan + dimethylallyl diphosphate = 4-(3-methylbut-2-enyl)-L-tryptophan + diphosphate</text>
        <dbReference type="Rhea" id="RHEA:14173"/>
        <dbReference type="ChEBI" id="CHEBI:33019"/>
        <dbReference type="ChEBI" id="CHEBI:57623"/>
        <dbReference type="ChEBI" id="CHEBI:57912"/>
        <dbReference type="ChEBI" id="CHEBI:58209"/>
        <dbReference type="EC" id="2.5.1.34"/>
    </reaction>
</comment>
<comment type="biophysicochemical properties">
    <kinetics>
        <KM evidence="3">14 uM for dimethylallyl diphosphate (in metal-free EDTA buffer)</KM>
        <KM evidence="3">40 uM for L-tryptophan (in metal-free EDTA buffer)</KM>
        <KM evidence="3">8 uM for dimethylallyl diphosphate (in the presence of 4 mM Ca(2+))</KM>
        <KM evidence="3">17 uM for L-tryptophan (in the presence of 4 mM Ca(2+))</KM>
        <KM evidence="3">8 uM for dimethylallyl diphosphate (in the presence of 4 mM Mg(2+))</KM>
        <KM evidence="3">12 uM for L-tryptophan (in the presence of 4 mM Mg(2+))</KM>
        <Vmax evidence="3">215.0 nmol/min/mg enzyme (in metal-free EDTA buffer)</Vmax>
        <Vmax evidence="3">504.0 nmol/min/mg enzyme (in the presence of 4 mM Ca(2+))</Vmax>
        <Vmax evidence="3">455.0 nmol/min/mg enzyme (in the presence of 4 mM Mg(2+))</Vmax>
    </kinetics>
</comment>
<comment type="pathway">
    <text evidence="3 5">Alkaloid biosynthesis; ergot alkaloid biosynthesis.</text>
</comment>
<comment type="subunit">
    <text evidence="3">Homodimer.</text>
</comment>
<comment type="similarity">
    <text evidence="8">Belongs to the tryptophan dimethylallyltransferase family.</text>
</comment>
<gene>
    <name evidence="7" type="primary">dmaW</name>
</gene>
<protein>
    <recommendedName>
        <fullName evidence="6">Tryptophan dimethylallyltransferase</fullName>
        <ecNumber evidence="3 5">2.5.1.34</ecNumber>
    </recommendedName>
    <alternativeName>
        <fullName evidence="7">4-dimethylallyltryptophan synthase</fullName>
        <shortName evidence="7">DMATS</shortName>
    </alternativeName>
    <alternativeName>
        <fullName evidence="8">All-trans-hexaprenyl-diphosphate synthase</fullName>
    </alternativeName>
    <alternativeName>
        <fullName evidence="8">L-tryptophan dimethylallyl transferase</fullName>
    </alternativeName>
</protein>
<evidence type="ECO:0000250" key="1">
    <source>
        <dbReference type="UniProtKB" id="P0CT20"/>
    </source>
</evidence>
<evidence type="ECO:0000250" key="2">
    <source>
        <dbReference type="UniProtKB" id="Q50EL0"/>
    </source>
</evidence>
<evidence type="ECO:0000269" key="3">
    <source>
    </source>
</evidence>
<evidence type="ECO:0000269" key="4">
    <source>
    </source>
</evidence>
<evidence type="ECO:0000269" key="5">
    <source>
    </source>
</evidence>
<evidence type="ECO:0000303" key="6">
    <source>
    </source>
</evidence>
<evidence type="ECO:0000303" key="7">
    <source>
    </source>
</evidence>
<evidence type="ECO:0000305" key="8"/>
<keyword id="KW-0017">Alkaloid metabolism</keyword>
<keyword id="KW-0903">Direct protein sequencing</keyword>
<keyword id="KW-0808">Transferase</keyword>
<dbReference type="EC" id="2.5.1.34" evidence="3 5"/>
<dbReference type="EMBL" id="L39640">
    <property type="protein sequence ID" value="AAC18893.1"/>
    <property type="molecule type" value="Genomic_DNA"/>
</dbReference>
<dbReference type="EMBL" id="EU006773">
    <property type="protein sequence ID" value="ABV57826.1"/>
    <property type="molecule type" value="Genomic_DNA"/>
</dbReference>
<dbReference type="SMR" id="Q12594"/>
<dbReference type="SABIO-RK" id="Q12594"/>
<dbReference type="UniPathway" id="UPA00327"/>
<dbReference type="GO" id="GO:0050364">
    <property type="term" value="F:tryptophan dimethylallyltransferase activity"/>
    <property type="evidence" value="ECO:0007669"/>
    <property type="project" value="UniProtKB-EC"/>
</dbReference>
<dbReference type="GO" id="GO:0035837">
    <property type="term" value="P:ergot alkaloid biosynthetic process"/>
    <property type="evidence" value="ECO:0007669"/>
    <property type="project" value="InterPro"/>
</dbReference>
<dbReference type="CDD" id="cd13929">
    <property type="entry name" value="PT-DMATS_CymD"/>
    <property type="match status" value="1"/>
</dbReference>
<dbReference type="InterPro" id="IPR033964">
    <property type="entry name" value="Aro_prenylTrfase"/>
</dbReference>
<dbReference type="InterPro" id="IPR017795">
    <property type="entry name" value="Aro_prenylTrfase_DMATS"/>
</dbReference>
<dbReference type="InterPro" id="IPR012148">
    <property type="entry name" value="DMATS-type_fun"/>
</dbReference>
<dbReference type="InterPro" id="IPR017796">
    <property type="entry name" value="Trp_dimethylallylTrfase"/>
</dbReference>
<dbReference type="NCBIfam" id="TIGR03429">
    <property type="entry name" value="arom_pren_DMATS"/>
    <property type="match status" value="1"/>
</dbReference>
<dbReference type="NCBIfam" id="TIGR03430">
    <property type="entry name" value="trp_dimet_allyl"/>
    <property type="match status" value="1"/>
</dbReference>
<dbReference type="PANTHER" id="PTHR40627">
    <property type="entry name" value="INDOLE PRENYLTRANSFERASE TDIB-RELATED"/>
    <property type="match status" value="1"/>
</dbReference>
<dbReference type="PANTHER" id="PTHR40627:SF3">
    <property type="entry name" value="PRENYLTRANSFERASE ASQH2-RELATED"/>
    <property type="match status" value="1"/>
</dbReference>
<dbReference type="Pfam" id="PF11991">
    <property type="entry name" value="Trp_DMAT"/>
    <property type="match status" value="1"/>
</dbReference>
<dbReference type="PIRSF" id="PIRSF000509">
    <property type="entry name" value="Trp_DMAT"/>
    <property type="match status" value="1"/>
</dbReference>
<dbReference type="SFLD" id="SFLDS00036">
    <property type="entry name" value="Aromatic_Prenyltransferase"/>
    <property type="match status" value="1"/>
</dbReference>
<dbReference type="SFLD" id="SFLDG01162">
    <property type="entry name" value="I"/>
    <property type="match status" value="1"/>
</dbReference>
<name>DMAW_CLAFS</name>
<reference key="1">
    <citation type="journal article" date="1995" name="Biochem. Biophys. Res. Commun.">
        <title>The Claviceps purpurea gene encoding dimethylallyltryptophan synthase, the committed step for ergot alkaloid biosynthesis.</title>
        <authorList>
            <person name="Tsai H.-F."/>
            <person name="Wang H."/>
            <person name="Gebler J.C."/>
            <person name="Poulter C.D."/>
            <person name="Schardl C.L."/>
        </authorList>
    </citation>
    <scope>NUCLEOTIDE SEQUENCE [GENOMIC DNA]</scope>
    <scope>PROTEIN SEQUENCE OF 340-349; 351-360 AND 384-407</scope>
    <scope>CATALYTIC ACTIVITY</scope>
    <scope>PATHWAY</scope>
    <source>
        <strain>ATCC 26245 / DSM 2942 / CBS 164.59</strain>
    </source>
</reference>
<reference key="2">
    <citation type="journal article" date="2007" name="Appl. Environ. Microbiol.">
        <title>Comparison of ergot alkaloid biosynthesis gene clusters in Claviceps species indicates loss of late pathway steps in evolution of C. fusiformis.</title>
        <authorList>
            <person name="Lorenz N."/>
            <person name="Wilson E.V."/>
            <person name="Machado C."/>
            <person name="Schardl C.L."/>
            <person name="Tudzynski P."/>
        </authorList>
    </citation>
    <scope>NUCLEOTIDE SEQUENCE [GENOMIC DNA]</scope>
    <scope>FUNCTION</scope>
    <source>
        <strain>ATCC 26245 / DSM 2942 / CBS 164.59</strain>
    </source>
</reference>
<reference key="3">
    <citation type="journal article" date="1992" name="Arch. Biochem. Biophys.">
        <title>Purification and characterization of dimethylallyl tryptophan synthase from Claviceps purpurea.</title>
        <authorList>
            <person name="Gebler J.C."/>
            <person name="Poulter C.D."/>
        </authorList>
    </citation>
    <scope>FUNCTION</scope>
    <scope>CATALYTIC ACTIVITY</scope>
    <scope>SUBUNIT</scope>
    <scope>BIOPHYSICOCHEMICAL PROPERTIES</scope>
    <source>
        <strain>ATCC 26245 / DSM 2942 / CBS 164.59</strain>
    </source>
</reference>
<sequence>MMTKAPATAVYDTLSLLFDFPNQEQRLWWHSIAPMFAAMLDTAGHNVHDQYRHLGIFKKHIIPFLGVYPAQGKHTWPSVLTRYGIPFELSLNCLDSVVRYTFEPTTEHTGTGDDSYNAFAILECIQKLVRIQPGIDMEWFSYFRNELVLNATESARLGRNDSVNQQPIRTQNKLALDLKGDRFALKVYLYPHLKSIATGVSSHDLIFNSVRKLSQKHTSIQPSFNVLCDYVASRNDPDSNAAEAEAGVPASALRARLLSCDLVDPSKSRIKIYLLEQTVSLTAMEDLWTLGGRRTDSSTLNGLDMMRELWHLLQIPSGFMKYPESDLKLGEVPDEQLPSMVHYALHPDQPMPEPQVYFTVFGMSDAGITNALATFFSRHGWYEMAKKYRVFLEGSFPNHDFESLNYLHTYVSFSYRKNKPYLSVYLHSFETGQWPAFSDDPTAFNAFKRCDLSLT</sequence>
<feature type="chain" id="PRO_0000181363" description="Tryptophan dimethylallyltransferase">
    <location>
        <begin position="1"/>
        <end position="455"/>
    </location>
</feature>
<feature type="binding site" evidence="2">
    <location>
        <begin position="79"/>
        <end position="80"/>
    </location>
    <ligand>
        <name>L-tryptophan</name>
        <dbReference type="ChEBI" id="CHEBI:57912"/>
    </ligand>
</feature>
<feature type="binding site" evidence="2">
    <location>
        <position position="88"/>
    </location>
    <ligand>
        <name>L-tryptophan</name>
        <dbReference type="ChEBI" id="CHEBI:57912"/>
    </ligand>
</feature>
<feature type="binding site" evidence="2">
    <location>
        <position position="99"/>
    </location>
    <ligand>
        <name>substrate</name>
    </ligand>
</feature>
<feature type="binding site" evidence="2">
    <location>
        <position position="186"/>
    </location>
    <ligand>
        <name>substrate</name>
    </ligand>
</feature>
<feature type="binding site" evidence="2">
    <location>
        <position position="188"/>
    </location>
    <ligand>
        <name>substrate</name>
    </ligand>
</feature>
<feature type="binding site" evidence="2">
    <location>
        <position position="190"/>
    </location>
    <ligand>
        <name>L-tryptophan</name>
        <dbReference type="ChEBI" id="CHEBI:57912"/>
    </ligand>
</feature>
<feature type="binding site" evidence="2">
    <location>
        <position position="256"/>
    </location>
    <ligand>
        <name>L-tryptophan</name>
        <dbReference type="ChEBI" id="CHEBI:57912"/>
    </ligand>
</feature>
<feature type="binding site" evidence="2">
    <location>
        <position position="269"/>
    </location>
    <ligand>
        <name>substrate</name>
    </ligand>
</feature>
<feature type="binding site" evidence="2">
    <location>
        <position position="271"/>
    </location>
    <ligand>
        <name>substrate</name>
    </ligand>
</feature>
<feature type="binding site" evidence="2">
    <location>
        <position position="273"/>
    </location>
    <ligand>
        <name>substrate</name>
    </ligand>
</feature>
<feature type="binding site" evidence="2">
    <location>
        <position position="355"/>
    </location>
    <ligand>
        <name>substrate</name>
    </ligand>
</feature>
<feature type="binding site" evidence="2">
    <location>
        <position position="357"/>
    </location>
    <ligand>
        <name>substrate</name>
    </ligand>
</feature>
<feature type="binding site" evidence="2">
    <location>
        <position position="421"/>
    </location>
    <ligand>
        <name>substrate</name>
    </ligand>
</feature>
<feature type="binding site" evidence="2">
    <location>
        <position position="425"/>
    </location>
    <ligand>
        <name>substrate</name>
    </ligand>
</feature>
<organism>
    <name type="scientific">Claviceps fusiformis</name>
    <name type="common">Ergot fungus</name>
    <dbReference type="NCBI Taxonomy" id="40602"/>
    <lineage>
        <taxon>Eukaryota</taxon>
        <taxon>Fungi</taxon>
        <taxon>Dikarya</taxon>
        <taxon>Ascomycota</taxon>
        <taxon>Pezizomycotina</taxon>
        <taxon>Sordariomycetes</taxon>
        <taxon>Hypocreomycetidae</taxon>
        <taxon>Hypocreales</taxon>
        <taxon>Clavicipitaceae</taxon>
        <taxon>Claviceps</taxon>
    </lineage>
</organism>
<proteinExistence type="evidence at protein level"/>